<accession>Q1J1C0</accession>
<comment type="function">
    <text evidence="1">Catalyzes the reversible reaction in which hydroxymethyl group from 5,10-methylenetetrahydrofolate is transferred onto alpha-ketoisovalerate to form ketopantoate.</text>
</comment>
<comment type="catalytic activity">
    <reaction evidence="1">
        <text>3-methyl-2-oxobutanoate + (6R)-5,10-methylene-5,6,7,8-tetrahydrofolate + H2O = 2-dehydropantoate + (6S)-5,6,7,8-tetrahydrofolate</text>
        <dbReference type="Rhea" id="RHEA:11824"/>
        <dbReference type="ChEBI" id="CHEBI:11561"/>
        <dbReference type="ChEBI" id="CHEBI:11851"/>
        <dbReference type="ChEBI" id="CHEBI:15377"/>
        <dbReference type="ChEBI" id="CHEBI:15636"/>
        <dbReference type="ChEBI" id="CHEBI:57453"/>
        <dbReference type="EC" id="2.1.2.11"/>
    </reaction>
</comment>
<comment type="cofactor">
    <cofactor evidence="1">
        <name>Mg(2+)</name>
        <dbReference type="ChEBI" id="CHEBI:18420"/>
    </cofactor>
    <text evidence="1">Binds 1 Mg(2+) ion per subunit.</text>
</comment>
<comment type="pathway">
    <text evidence="1">Cofactor biosynthesis; (R)-pantothenate biosynthesis; (R)-pantoate from 3-methyl-2-oxobutanoate: step 1/2.</text>
</comment>
<comment type="subunit">
    <text evidence="1">Homodecamer; pentamer of dimers.</text>
</comment>
<comment type="subcellular location">
    <subcellularLocation>
        <location evidence="1">Cytoplasm</location>
    </subcellularLocation>
</comment>
<comment type="similarity">
    <text evidence="1">Belongs to the PanB family.</text>
</comment>
<evidence type="ECO:0000255" key="1">
    <source>
        <dbReference type="HAMAP-Rule" id="MF_00156"/>
    </source>
</evidence>
<name>PANB_DEIGD</name>
<sequence length="273" mass="29203">MKRSVPDLMNASEPLVMVTAYDYPGARHAEAAGVDLILVGDSLGNVVLGYDSTAPVTLDDMIHHARAVRRGAPNTFLVVDLPFGTYHTGVTDAMRNAVRVIQQTGADAVKLEGATPEVLDVVGVLARNGIPVMGHVGLMPQTATAQGGLKVQGRDEASARRTLEGALALEAAGAFSVVLEAIPARLARLITERLHVPTIGIGAGVHCRGQVLVYHDLLGLYEGDEKKLAKRYAELGKEAREAIAAYAREVRAREFPTKDQSFVMKDDVLGKLY</sequence>
<protein>
    <recommendedName>
        <fullName evidence="1">3-methyl-2-oxobutanoate hydroxymethyltransferase</fullName>
        <ecNumber evidence="1">2.1.2.11</ecNumber>
    </recommendedName>
    <alternativeName>
        <fullName evidence="1">Ketopantoate hydroxymethyltransferase</fullName>
        <shortName evidence="1">KPHMT</shortName>
    </alternativeName>
</protein>
<feature type="chain" id="PRO_0000297258" description="3-methyl-2-oxobutanoate hydroxymethyltransferase">
    <location>
        <begin position="1"/>
        <end position="273"/>
    </location>
</feature>
<feature type="active site" description="Proton acceptor" evidence="1">
    <location>
        <position position="180"/>
    </location>
</feature>
<feature type="binding site" evidence="1">
    <location>
        <begin position="41"/>
        <end position="42"/>
    </location>
    <ligand>
        <name>3-methyl-2-oxobutanoate</name>
        <dbReference type="ChEBI" id="CHEBI:11851"/>
    </ligand>
</feature>
<feature type="binding site" evidence="1">
    <location>
        <position position="41"/>
    </location>
    <ligand>
        <name>Mg(2+)</name>
        <dbReference type="ChEBI" id="CHEBI:18420"/>
    </ligand>
</feature>
<feature type="binding site" evidence="1">
    <location>
        <position position="80"/>
    </location>
    <ligand>
        <name>3-methyl-2-oxobutanoate</name>
        <dbReference type="ChEBI" id="CHEBI:11851"/>
    </ligand>
</feature>
<feature type="binding site" evidence="1">
    <location>
        <position position="80"/>
    </location>
    <ligand>
        <name>Mg(2+)</name>
        <dbReference type="ChEBI" id="CHEBI:18420"/>
    </ligand>
</feature>
<feature type="binding site" evidence="1">
    <location>
        <position position="110"/>
    </location>
    <ligand>
        <name>3-methyl-2-oxobutanoate</name>
        <dbReference type="ChEBI" id="CHEBI:11851"/>
    </ligand>
</feature>
<feature type="binding site" evidence="1">
    <location>
        <position position="112"/>
    </location>
    <ligand>
        <name>Mg(2+)</name>
        <dbReference type="ChEBI" id="CHEBI:18420"/>
    </ligand>
</feature>
<dbReference type="EC" id="2.1.2.11" evidence="1"/>
<dbReference type="EMBL" id="CP000359">
    <property type="protein sequence ID" value="ABF44714.1"/>
    <property type="molecule type" value="Genomic_DNA"/>
</dbReference>
<dbReference type="RefSeq" id="WP_011529558.1">
    <property type="nucleotide sequence ID" value="NC_008025.1"/>
</dbReference>
<dbReference type="SMR" id="Q1J1C0"/>
<dbReference type="STRING" id="319795.Dgeo_0411"/>
<dbReference type="KEGG" id="dge:Dgeo_0411"/>
<dbReference type="eggNOG" id="COG0413">
    <property type="taxonomic scope" value="Bacteria"/>
</dbReference>
<dbReference type="HOGENOM" id="CLU_036645_1_0_0"/>
<dbReference type="UniPathway" id="UPA00028">
    <property type="reaction ID" value="UER00003"/>
</dbReference>
<dbReference type="Proteomes" id="UP000002431">
    <property type="component" value="Chromosome"/>
</dbReference>
<dbReference type="GO" id="GO:0005737">
    <property type="term" value="C:cytoplasm"/>
    <property type="evidence" value="ECO:0007669"/>
    <property type="project" value="UniProtKB-SubCell"/>
</dbReference>
<dbReference type="GO" id="GO:0003864">
    <property type="term" value="F:3-methyl-2-oxobutanoate hydroxymethyltransferase activity"/>
    <property type="evidence" value="ECO:0007669"/>
    <property type="project" value="UniProtKB-UniRule"/>
</dbReference>
<dbReference type="GO" id="GO:0000287">
    <property type="term" value="F:magnesium ion binding"/>
    <property type="evidence" value="ECO:0007669"/>
    <property type="project" value="TreeGrafter"/>
</dbReference>
<dbReference type="GO" id="GO:0015940">
    <property type="term" value="P:pantothenate biosynthetic process"/>
    <property type="evidence" value="ECO:0007669"/>
    <property type="project" value="UniProtKB-UniRule"/>
</dbReference>
<dbReference type="CDD" id="cd06557">
    <property type="entry name" value="KPHMT-like"/>
    <property type="match status" value="1"/>
</dbReference>
<dbReference type="FunFam" id="3.20.20.60:FF:000003">
    <property type="entry name" value="3-methyl-2-oxobutanoate hydroxymethyltransferase"/>
    <property type="match status" value="1"/>
</dbReference>
<dbReference type="Gene3D" id="3.20.20.60">
    <property type="entry name" value="Phosphoenolpyruvate-binding domains"/>
    <property type="match status" value="1"/>
</dbReference>
<dbReference type="HAMAP" id="MF_00156">
    <property type="entry name" value="PanB"/>
    <property type="match status" value="1"/>
</dbReference>
<dbReference type="InterPro" id="IPR003700">
    <property type="entry name" value="Pantoate_hydroxy_MeTrfase"/>
</dbReference>
<dbReference type="InterPro" id="IPR015813">
    <property type="entry name" value="Pyrv/PenolPyrv_kinase-like_dom"/>
</dbReference>
<dbReference type="InterPro" id="IPR040442">
    <property type="entry name" value="Pyrv_kinase-like_dom_sf"/>
</dbReference>
<dbReference type="NCBIfam" id="TIGR00222">
    <property type="entry name" value="panB"/>
    <property type="match status" value="1"/>
</dbReference>
<dbReference type="NCBIfam" id="NF001452">
    <property type="entry name" value="PRK00311.1"/>
    <property type="match status" value="1"/>
</dbReference>
<dbReference type="PANTHER" id="PTHR20881">
    <property type="entry name" value="3-METHYL-2-OXOBUTANOATE HYDROXYMETHYLTRANSFERASE"/>
    <property type="match status" value="1"/>
</dbReference>
<dbReference type="PANTHER" id="PTHR20881:SF0">
    <property type="entry name" value="3-METHYL-2-OXOBUTANOATE HYDROXYMETHYLTRANSFERASE"/>
    <property type="match status" value="1"/>
</dbReference>
<dbReference type="Pfam" id="PF02548">
    <property type="entry name" value="Pantoate_transf"/>
    <property type="match status" value="1"/>
</dbReference>
<dbReference type="PIRSF" id="PIRSF000388">
    <property type="entry name" value="Pantoate_hydroxy_MeTrfase"/>
    <property type="match status" value="1"/>
</dbReference>
<dbReference type="SUPFAM" id="SSF51621">
    <property type="entry name" value="Phosphoenolpyruvate/pyruvate domain"/>
    <property type="match status" value="1"/>
</dbReference>
<keyword id="KW-0963">Cytoplasm</keyword>
<keyword id="KW-0460">Magnesium</keyword>
<keyword id="KW-0479">Metal-binding</keyword>
<keyword id="KW-0566">Pantothenate biosynthesis</keyword>
<keyword id="KW-0808">Transferase</keyword>
<organism>
    <name type="scientific">Deinococcus geothermalis (strain DSM 11300 / CIP 105573 / AG-3a)</name>
    <dbReference type="NCBI Taxonomy" id="319795"/>
    <lineage>
        <taxon>Bacteria</taxon>
        <taxon>Thermotogati</taxon>
        <taxon>Deinococcota</taxon>
        <taxon>Deinococci</taxon>
        <taxon>Deinococcales</taxon>
        <taxon>Deinococcaceae</taxon>
        <taxon>Deinococcus</taxon>
    </lineage>
</organism>
<gene>
    <name evidence="1" type="primary">panB</name>
    <name type="ordered locus">Dgeo_0411</name>
</gene>
<reference key="1">
    <citation type="submission" date="2006-04" db="EMBL/GenBank/DDBJ databases">
        <title>Complete sequence of chromosome of Deinococcus geothermalis DSM 11300.</title>
        <authorList>
            <person name="Copeland A."/>
            <person name="Lucas S."/>
            <person name="Lapidus A."/>
            <person name="Barry K."/>
            <person name="Detter J.C."/>
            <person name="Glavina del Rio T."/>
            <person name="Hammon N."/>
            <person name="Israni S."/>
            <person name="Dalin E."/>
            <person name="Tice H."/>
            <person name="Pitluck S."/>
            <person name="Brettin T."/>
            <person name="Bruce D."/>
            <person name="Han C."/>
            <person name="Tapia R."/>
            <person name="Saunders E."/>
            <person name="Gilna P."/>
            <person name="Schmutz J."/>
            <person name="Larimer F."/>
            <person name="Land M."/>
            <person name="Hauser L."/>
            <person name="Kyrpides N."/>
            <person name="Kim E."/>
            <person name="Daly M.J."/>
            <person name="Fredrickson J.K."/>
            <person name="Makarova K.S."/>
            <person name="Gaidamakova E.K."/>
            <person name="Zhai M."/>
            <person name="Richardson P."/>
        </authorList>
    </citation>
    <scope>NUCLEOTIDE SEQUENCE [LARGE SCALE GENOMIC DNA]</scope>
    <source>
        <strain>DSM 11300 / CIP 105573 / AG-3a</strain>
    </source>
</reference>
<proteinExistence type="inferred from homology"/>